<gene>
    <name evidence="1" type="primary">surA</name>
    <name type="ordered locus">RSc0516</name>
</gene>
<reference key="1">
    <citation type="journal article" date="2002" name="Nature">
        <title>Genome sequence of the plant pathogen Ralstonia solanacearum.</title>
        <authorList>
            <person name="Salanoubat M."/>
            <person name="Genin S."/>
            <person name="Artiguenave F."/>
            <person name="Gouzy J."/>
            <person name="Mangenot S."/>
            <person name="Arlat M."/>
            <person name="Billault A."/>
            <person name="Brottier P."/>
            <person name="Camus J.-C."/>
            <person name="Cattolico L."/>
            <person name="Chandler M."/>
            <person name="Choisne N."/>
            <person name="Claudel-Renard C."/>
            <person name="Cunnac S."/>
            <person name="Demange N."/>
            <person name="Gaspin C."/>
            <person name="Lavie M."/>
            <person name="Moisan A."/>
            <person name="Robert C."/>
            <person name="Saurin W."/>
            <person name="Schiex T."/>
            <person name="Siguier P."/>
            <person name="Thebault P."/>
            <person name="Whalen M."/>
            <person name="Wincker P."/>
            <person name="Levy M."/>
            <person name="Weissenbach J."/>
            <person name="Boucher C.A."/>
        </authorList>
    </citation>
    <scope>NUCLEOTIDE SEQUENCE [LARGE SCALE GENOMIC DNA]</scope>
    <source>
        <strain>ATCC BAA-1114 / GMI1000</strain>
    </source>
</reference>
<sequence length="496" mass="53610">MACKSTAVRSATRVAPTRRLGMVTGALVALMAGAALLPAAHAQQTQKKSAPLRGIFTTPDASPSQPLLRGTLPGPSTASGAARSQLVDEVVAVVNTDIITRRELLDRADLVERTLQSQNRQVPVRADLLGEVLEQLILERVQAQTAKESGIRVSDADVDRAVESVAQRNNLSVSQLKSKLAQSGLAYDKYREDLRQEILLARLRDREVDSKVQVFDGEIDNFLAQQGGSAASSGVQEYNVAQILVPVAEDASAEQKAAARGKAESLLKQVQGGADFAKLARDSSGAPEAAQGGELGLRPIGRLPAQFANAVVDLKPGQVVDQVIESPAGFHVLKLVDKRAQGTAITAKVAQTQVRHILIKTGPTMSADDARRQLAGLRDRIVHGYDFGDAARRYSQDTSASAGGELGWVSPGQLVPEFEQAMGLLKPGEVSQPVQSQFGLHLIQVEGRREAEVPVDRQRDYARSVIREQKVQAAYEDWLRQLRDSAHVEYRVNRQQ</sequence>
<comment type="function">
    <text evidence="1">Chaperone involved in the correct folding and assembly of outer membrane proteins. Recognizes specific patterns of aromatic residues and the orientation of their side chains, which are found more frequently in integral outer membrane proteins. May act in both early periplasmic and late outer membrane-associated steps of protein maturation.</text>
</comment>
<comment type="catalytic activity">
    <reaction evidence="1">
        <text>[protein]-peptidylproline (omega=180) = [protein]-peptidylproline (omega=0)</text>
        <dbReference type="Rhea" id="RHEA:16237"/>
        <dbReference type="Rhea" id="RHEA-COMP:10747"/>
        <dbReference type="Rhea" id="RHEA-COMP:10748"/>
        <dbReference type="ChEBI" id="CHEBI:83833"/>
        <dbReference type="ChEBI" id="CHEBI:83834"/>
        <dbReference type="EC" id="5.2.1.8"/>
    </reaction>
</comment>
<comment type="subcellular location">
    <subcellularLocation>
        <location evidence="1">Periplasm</location>
    </subcellularLocation>
    <text evidence="1">Is capable of associating with the outer membrane.</text>
</comment>
<comment type="domain">
    <text evidence="1">The PPIase activity resides only in the second parvulin domain. The N-terminal region and the C-terminal tail are necessary and sufficient for the chaperone activity of SurA. The PPIase activity is dispensable for SurA to function as a chaperone. The N-terminal region and the C-terminal tail are also required for porin recognition.</text>
</comment>
<comment type="sequence caution" evidence="3">
    <conflict type="erroneous initiation">
        <sequence resource="EMBL-CDS" id="CAD14044"/>
    </conflict>
</comment>
<organism>
    <name type="scientific">Ralstonia nicotianae (strain ATCC BAA-1114 / GMI1000)</name>
    <name type="common">Ralstonia solanacearum</name>
    <dbReference type="NCBI Taxonomy" id="267608"/>
    <lineage>
        <taxon>Bacteria</taxon>
        <taxon>Pseudomonadati</taxon>
        <taxon>Pseudomonadota</taxon>
        <taxon>Betaproteobacteria</taxon>
        <taxon>Burkholderiales</taxon>
        <taxon>Burkholderiaceae</taxon>
        <taxon>Ralstonia</taxon>
        <taxon>Ralstonia solanacearum species complex</taxon>
    </lineage>
</organism>
<keyword id="KW-0143">Chaperone</keyword>
<keyword id="KW-0413">Isomerase</keyword>
<keyword id="KW-0574">Periplasm</keyword>
<keyword id="KW-1185">Reference proteome</keyword>
<keyword id="KW-0677">Repeat</keyword>
<keyword id="KW-0697">Rotamase</keyword>
<keyword id="KW-0732">Signal</keyword>
<name>SURA_RALN1</name>
<dbReference type="EC" id="5.2.1.8" evidence="1"/>
<dbReference type="EMBL" id="AL646052">
    <property type="protein sequence ID" value="CAD14044.1"/>
    <property type="status" value="ALT_INIT"/>
    <property type="molecule type" value="Genomic_DNA"/>
</dbReference>
<dbReference type="RefSeq" id="WP_020831275.1">
    <property type="nucleotide sequence ID" value="NC_003295.1"/>
</dbReference>
<dbReference type="SMR" id="Q8Y220"/>
<dbReference type="STRING" id="267608.RSc0516"/>
<dbReference type="EnsemblBacteria" id="CAD14044">
    <property type="protein sequence ID" value="CAD14044"/>
    <property type="gene ID" value="RSc0516"/>
</dbReference>
<dbReference type="KEGG" id="rso:RSc0516"/>
<dbReference type="eggNOG" id="COG0760">
    <property type="taxonomic scope" value="Bacteria"/>
</dbReference>
<dbReference type="HOGENOM" id="CLU_034646_11_0_4"/>
<dbReference type="Proteomes" id="UP000001436">
    <property type="component" value="Chromosome"/>
</dbReference>
<dbReference type="GO" id="GO:0030288">
    <property type="term" value="C:outer membrane-bounded periplasmic space"/>
    <property type="evidence" value="ECO:0007669"/>
    <property type="project" value="InterPro"/>
</dbReference>
<dbReference type="GO" id="GO:0042277">
    <property type="term" value="F:peptide binding"/>
    <property type="evidence" value="ECO:0007669"/>
    <property type="project" value="InterPro"/>
</dbReference>
<dbReference type="GO" id="GO:0003755">
    <property type="term" value="F:peptidyl-prolyl cis-trans isomerase activity"/>
    <property type="evidence" value="ECO:0007669"/>
    <property type="project" value="UniProtKB-UniRule"/>
</dbReference>
<dbReference type="GO" id="GO:0051082">
    <property type="term" value="F:unfolded protein binding"/>
    <property type="evidence" value="ECO:0007669"/>
    <property type="project" value="UniProtKB-UniRule"/>
</dbReference>
<dbReference type="GO" id="GO:0043165">
    <property type="term" value="P:Gram-negative-bacterium-type cell outer membrane assembly"/>
    <property type="evidence" value="ECO:0007669"/>
    <property type="project" value="InterPro"/>
</dbReference>
<dbReference type="GO" id="GO:0006457">
    <property type="term" value="P:protein folding"/>
    <property type="evidence" value="ECO:0007669"/>
    <property type="project" value="UniProtKB-UniRule"/>
</dbReference>
<dbReference type="GO" id="GO:0050821">
    <property type="term" value="P:protein stabilization"/>
    <property type="evidence" value="ECO:0007669"/>
    <property type="project" value="InterPro"/>
</dbReference>
<dbReference type="Gene3D" id="3.10.50.40">
    <property type="match status" value="2"/>
</dbReference>
<dbReference type="Gene3D" id="1.10.4030.10">
    <property type="entry name" value="Porin chaperone SurA, peptide-binding domain"/>
    <property type="match status" value="1"/>
</dbReference>
<dbReference type="HAMAP" id="MF_01183">
    <property type="entry name" value="Chaperone_SurA"/>
    <property type="match status" value="1"/>
</dbReference>
<dbReference type="InterPro" id="IPR050280">
    <property type="entry name" value="OMP_Chaperone_SurA"/>
</dbReference>
<dbReference type="InterPro" id="IPR046357">
    <property type="entry name" value="PPIase_dom_sf"/>
</dbReference>
<dbReference type="InterPro" id="IPR000297">
    <property type="entry name" value="PPIase_PpiC"/>
</dbReference>
<dbReference type="InterPro" id="IPR023058">
    <property type="entry name" value="PPIase_PpiC_CS"/>
</dbReference>
<dbReference type="InterPro" id="IPR023034">
    <property type="entry name" value="PPIase_SurA"/>
</dbReference>
<dbReference type="InterPro" id="IPR015391">
    <property type="entry name" value="SurA_N"/>
</dbReference>
<dbReference type="InterPro" id="IPR027304">
    <property type="entry name" value="Trigger_fact/SurA_dom_sf"/>
</dbReference>
<dbReference type="PANTHER" id="PTHR47637">
    <property type="entry name" value="CHAPERONE SURA"/>
    <property type="match status" value="1"/>
</dbReference>
<dbReference type="PANTHER" id="PTHR47637:SF1">
    <property type="entry name" value="CHAPERONE SURA"/>
    <property type="match status" value="1"/>
</dbReference>
<dbReference type="Pfam" id="PF00639">
    <property type="entry name" value="Rotamase"/>
    <property type="match status" value="1"/>
</dbReference>
<dbReference type="Pfam" id="PF13616">
    <property type="entry name" value="Rotamase_3"/>
    <property type="match status" value="1"/>
</dbReference>
<dbReference type="Pfam" id="PF09312">
    <property type="entry name" value="SurA_N"/>
    <property type="match status" value="1"/>
</dbReference>
<dbReference type="SUPFAM" id="SSF54534">
    <property type="entry name" value="FKBP-like"/>
    <property type="match status" value="2"/>
</dbReference>
<dbReference type="SUPFAM" id="SSF109998">
    <property type="entry name" value="Triger factor/SurA peptide-binding domain-like"/>
    <property type="match status" value="1"/>
</dbReference>
<dbReference type="PROSITE" id="PS01096">
    <property type="entry name" value="PPIC_PPIASE_1"/>
    <property type="match status" value="1"/>
</dbReference>
<dbReference type="PROSITE" id="PS50198">
    <property type="entry name" value="PPIC_PPIASE_2"/>
    <property type="match status" value="2"/>
</dbReference>
<protein>
    <recommendedName>
        <fullName evidence="1">Chaperone SurA</fullName>
    </recommendedName>
    <alternativeName>
        <fullName evidence="1">Peptidyl-prolyl cis-trans isomerase SurA</fullName>
        <shortName evidence="1">PPIase SurA</shortName>
        <ecNumber evidence="1">5.2.1.8</ecNumber>
    </alternativeName>
    <alternativeName>
        <fullName evidence="1">Rotamase SurA</fullName>
    </alternativeName>
</protein>
<evidence type="ECO:0000255" key="1">
    <source>
        <dbReference type="HAMAP-Rule" id="MF_01183"/>
    </source>
</evidence>
<evidence type="ECO:0000256" key="2">
    <source>
        <dbReference type="SAM" id="MobiDB-lite"/>
    </source>
</evidence>
<evidence type="ECO:0000305" key="3"/>
<proteinExistence type="inferred from homology"/>
<accession>Q8Y220</accession>
<feature type="signal peptide" evidence="1">
    <location>
        <begin position="1"/>
        <end position="42"/>
    </location>
</feature>
<feature type="chain" id="PRO_0000270033" description="Chaperone SurA">
    <location>
        <begin position="43"/>
        <end position="496"/>
    </location>
</feature>
<feature type="domain" description="PpiC 1" evidence="1">
    <location>
        <begin position="235"/>
        <end position="337"/>
    </location>
</feature>
<feature type="domain" description="PpiC 2" evidence="1">
    <location>
        <begin position="349"/>
        <end position="447"/>
    </location>
</feature>
<feature type="region of interest" description="Disordered" evidence="2">
    <location>
        <begin position="53"/>
        <end position="80"/>
    </location>
</feature>